<dbReference type="EC" id="1.8.3.2" evidence="7 11"/>
<dbReference type="EMBL" id="AF217799">
    <property type="protein sequence ID" value="AAM67412.1"/>
    <property type="molecule type" value="mRNA"/>
</dbReference>
<dbReference type="EMBL" id="AF285078">
    <property type="protein sequence ID" value="AAG53892.1"/>
    <property type="molecule type" value="mRNA"/>
</dbReference>
<dbReference type="EMBL" id="AB044285">
    <property type="protein sequence ID" value="BAB21937.1"/>
    <property type="molecule type" value="mRNA"/>
</dbReference>
<dbReference type="EMBL" id="AY623665">
    <property type="protein sequence ID" value="AAT40988.1"/>
    <property type="molecule type" value="mRNA"/>
</dbReference>
<dbReference type="RefSeq" id="NP_001103368.1">
    <molecule id="Q6IUU3-1"/>
    <property type="nucleotide sequence ID" value="NM_001109898.1"/>
</dbReference>
<dbReference type="RefSeq" id="NP_445883.1">
    <molecule id="Q6IUU3-3"/>
    <property type="nucleotide sequence ID" value="NM_053431.3"/>
</dbReference>
<dbReference type="PDB" id="4P2L">
    <property type="method" value="X-ray"/>
    <property type="resolution" value="2.90 A"/>
    <property type="chains" value="A/B=36-550"/>
</dbReference>
<dbReference type="PDBsum" id="4P2L"/>
<dbReference type="SMR" id="Q6IUU3"/>
<dbReference type="FunCoup" id="Q6IUU3">
    <property type="interactions" value="166"/>
</dbReference>
<dbReference type="STRING" id="10116.ENSRNOP00000061072"/>
<dbReference type="GlyCosmos" id="Q6IUU3">
    <property type="glycosylation" value="2 sites, No reported glycans"/>
</dbReference>
<dbReference type="GlyGen" id="Q6IUU3">
    <property type="glycosylation" value="2 sites"/>
</dbReference>
<dbReference type="PhosphoSitePlus" id="Q6IUU3"/>
<dbReference type="PaxDb" id="10116-ENSRNOP00000005052"/>
<dbReference type="Ensembl" id="ENSRNOT00000005052.10">
    <molecule id="Q6IUU3-3"/>
    <property type="protein sequence ID" value="ENSRNOP00000005052.6"/>
    <property type="gene ID" value="ENSRNOG00000003649.10"/>
</dbReference>
<dbReference type="Ensembl" id="ENSRNOT00000068044.4">
    <molecule id="Q6IUU3-1"/>
    <property type="protein sequence ID" value="ENSRNOP00000061072.2"/>
    <property type="gene ID" value="ENSRNOG00000003649.10"/>
</dbReference>
<dbReference type="GeneID" id="84491"/>
<dbReference type="KEGG" id="rno:84491"/>
<dbReference type="UCSC" id="RGD:68957">
    <molecule id="Q6IUU3-1"/>
    <property type="organism name" value="rat"/>
</dbReference>
<dbReference type="AGR" id="RGD:68957"/>
<dbReference type="CTD" id="5768"/>
<dbReference type="RGD" id="68957">
    <property type="gene designation" value="Qsox1"/>
</dbReference>
<dbReference type="eggNOG" id="KOG1731">
    <property type="taxonomic scope" value="Eukaryota"/>
</dbReference>
<dbReference type="GeneTree" id="ENSGT00940000159504"/>
<dbReference type="HOGENOM" id="CLU_020182_1_0_1"/>
<dbReference type="InParanoid" id="Q6IUU3"/>
<dbReference type="OMA" id="YGELWNE"/>
<dbReference type="OrthoDB" id="60685at9989"/>
<dbReference type="PhylomeDB" id="Q6IUU3"/>
<dbReference type="BRENDA" id="1.8.3.2">
    <property type="organism ID" value="5301"/>
</dbReference>
<dbReference type="Reactome" id="R-RNO-114608">
    <property type="pathway name" value="Platelet degranulation"/>
</dbReference>
<dbReference type="Reactome" id="R-RNO-381426">
    <property type="pathway name" value="Regulation of Insulin-like Growth Factor (IGF) transport and uptake by Insulin-like Growth Factor Binding Proteins (IGFBPs)"/>
</dbReference>
<dbReference type="Reactome" id="R-RNO-6798695">
    <property type="pathway name" value="Neutrophil degranulation"/>
</dbReference>
<dbReference type="Reactome" id="R-RNO-8957275">
    <property type="pathway name" value="Post-translational protein phosphorylation"/>
</dbReference>
<dbReference type="EvolutionaryTrace" id="Q6IUU3"/>
<dbReference type="PRO" id="PR:Q6IUU3"/>
<dbReference type="Proteomes" id="UP000002494">
    <property type="component" value="Chromosome 13"/>
</dbReference>
<dbReference type="Bgee" id="ENSRNOG00000003649">
    <property type="expression patterns" value="Expressed in pancreas and 19 other cell types or tissues"/>
</dbReference>
<dbReference type="GO" id="GO:0070062">
    <property type="term" value="C:extracellular exosome"/>
    <property type="evidence" value="ECO:0000266"/>
    <property type="project" value="RGD"/>
</dbReference>
<dbReference type="GO" id="GO:0005615">
    <property type="term" value="C:extracellular space"/>
    <property type="evidence" value="ECO:0000314"/>
    <property type="project" value="UniProtKB"/>
</dbReference>
<dbReference type="GO" id="GO:0000139">
    <property type="term" value="C:Golgi membrane"/>
    <property type="evidence" value="ECO:0000250"/>
    <property type="project" value="UniProtKB"/>
</dbReference>
<dbReference type="GO" id="GO:0071949">
    <property type="term" value="F:FAD binding"/>
    <property type="evidence" value="ECO:0000314"/>
    <property type="project" value="UniProtKB"/>
</dbReference>
<dbReference type="GO" id="GO:0016971">
    <property type="term" value="F:flavin-dependent sulfhydryl oxidase activity"/>
    <property type="evidence" value="ECO:0000314"/>
    <property type="project" value="UniProtKB"/>
</dbReference>
<dbReference type="GO" id="GO:0003756">
    <property type="term" value="F:protein disulfide isomerase activity"/>
    <property type="evidence" value="ECO:0000250"/>
    <property type="project" value="UniProtKB"/>
</dbReference>
<dbReference type="GO" id="GO:0085029">
    <property type="term" value="P:extracellular matrix assembly"/>
    <property type="evidence" value="ECO:0000266"/>
    <property type="project" value="RGD"/>
</dbReference>
<dbReference type="GO" id="GO:0016242">
    <property type="term" value="P:negative regulation of macroautophagy"/>
    <property type="evidence" value="ECO:0000266"/>
    <property type="project" value="RGD"/>
</dbReference>
<dbReference type="GO" id="GO:0006457">
    <property type="term" value="P:protein folding"/>
    <property type="evidence" value="ECO:0000318"/>
    <property type="project" value="GO_Central"/>
</dbReference>
<dbReference type="CDD" id="cd02992">
    <property type="entry name" value="PDI_a_QSOX"/>
    <property type="match status" value="1"/>
</dbReference>
<dbReference type="FunFam" id="1.20.120.1960:FF:000001">
    <property type="entry name" value="Sulfhydryl oxidase"/>
    <property type="match status" value="1"/>
</dbReference>
<dbReference type="FunFam" id="1.20.120.310:FF:000001">
    <property type="entry name" value="Sulfhydryl oxidase"/>
    <property type="match status" value="1"/>
</dbReference>
<dbReference type="FunFam" id="3.40.30.10:FF:000073">
    <property type="entry name" value="Sulfhydryl oxidase"/>
    <property type="match status" value="1"/>
</dbReference>
<dbReference type="FunFam" id="3.40.30.10:FF:000080">
    <property type="entry name" value="Sulfhydryl oxidase"/>
    <property type="match status" value="1"/>
</dbReference>
<dbReference type="Gene3D" id="1.20.120.310">
    <property type="entry name" value="ERV/ALR sulfhydryl oxidase domain"/>
    <property type="match status" value="1"/>
</dbReference>
<dbReference type="Gene3D" id="3.40.30.10">
    <property type="entry name" value="Glutaredoxin"/>
    <property type="match status" value="2"/>
</dbReference>
<dbReference type="Gene3D" id="1.20.120.1960">
    <property type="entry name" value="QSOX sulfhydryl oxidase domain"/>
    <property type="match status" value="1"/>
</dbReference>
<dbReference type="InterPro" id="IPR036774">
    <property type="entry name" value="ERV/ALR_sulphydryl_oxid_sf"/>
</dbReference>
<dbReference type="InterPro" id="IPR017905">
    <property type="entry name" value="ERV/ALR_sulphydryl_oxidase"/>
</dbReference>
<dbReference type="InterPro" id="IPR040986">
    <property type="entry name" value="QSOX_FAD-bd_dom"/>
</dbReference>
<dbReference type="InterPro" id="IPR042568">
    <property type="entry name" value="QSOX_FAD-bd_sf"/>
</dbReference>
<dbReference type="InterPro" id="IPR041269">
    <property type="entry name" value="QSOX_Trx1"/>
</dbReference>
<dbReference type="InterPro" id="IPR039798">
    <property type="entry name" value="Sulfhydryl_oxidase"/>
</dbReference>
<dbReference type="InterPro" id="IPR036249">
    <property type="entry name" value="Thioredoxin-like_sf"/>
</dbReference>
<dbReference type="InterPro" id="IPR013766">
    <property type="entry name" value="Thioredoxin_domain"/>
</dbReference>
<dbReference type="PANTHER" id="PTHR22897">
    <property type="entry name" value="QUIESCIN Q6-RELATED SULFHYDRYL OXIDASE"/>
    <property type="match status" value="1"/>
</dbReference>
<dbReference type="PANTHER" id="PTHR22897:SF6">
    <property type="entry name" value="SULFHYDRYL OXIDASE 1"/>
    <property type="match status" value="1"/>
</dbReference>
<dbReference type="Pfam" id="PF04777">
    <property type="entry name" value="Evr1_Alr"/>
    <property type="match status" value="1"/>
</dbReference>
<dbReference type="Pfam" id="PF18371">
    <property type="entry name" value="FAD_SOX"/>
    <property type="match status" value="1"/>
</dbReference>
<dbReference type="Pfam" id="PF18108">
    <property type="entry name" value="QSOX_Trx1"/>
    <property type="match status" value="1"/>
</dbReference>
<dbReference type="Pfam" id="PF00085">
    <property type="entry name" value="Thioredoxin"/>
    <property type="match status" value="1"/>
</dbReference>
<dbReference type="SUPFAM" id="SSF69000">
    <property type="entry name" value="FAD-dependent thiol oxidase"/>
    <property type="match status" value="1"/>
</dbReference>
<dbReference type="SUPFAM" id="SSF52833">
    <property type="entry name" value="Thioredoxin-like"/>
    <property type="match status" value="1"/>
</dbReference>
<dbReference type="PROSITE" id="PS51324">
    <property type="entry name" value="ERV_ALR"/>
    <property type="match status" value="1"/>
</dbReference>
<dbReference type="PROSITE" id="PS51352">
    <property type="entry name" value="THIOREDOXIN_2"/>
    <property type="match status" value="1"/>
</dbReference>
<gene>
    <name type="primary">Qsox1</name>
    <name type="synonym">Qscn6</name>
    <name type="synonym">Sox2</name>
</gene>
<evidence type="ECO:0000250" key="1"/>
<evidence type="ECO:0000250" key="2">
    <source>
        <dbReference type="UniProtKB" id="O00391"/>
    </source>
</evidence>
<evidence type="ECO:0000255" key="3"/>
<evidence type="ECO:0000255" key="4">
    <source>
        <dbReference type="PROSITE-ProRule" id="PRU00654"/>
    </source>
</evidence>
<evidence type="ECO:0000255" key="5">
    <source>
        <dbReference type="PROSITE-ProRule" id="PRU00691"/>
    </source>
</evidence>
<evidence type="ECO:0000256" key="6">
    <source>
        <dbReference type="SAM" id="MobiDB-lite"/>
    </source>
</evidence>
<evidence type="ECO:0000269" key="7">
    <source>
    </source>
</evidence>
<evidence type="ECO:0000269" key="8">
    <source>
    </source>
</evidence>
<evidence type="ECO:0000269" key="9">
    <source>
    </source>
</evidence>
<evidence type="ECO:0000269" key="10">
    <source>
    </source>
</evidence>
<evidence type="ECO:0000269" key="11">
    <source>
    </source>
</evidence>
<evidence type="ECO:0000303" key="12">
    <source>
    </source>
</evidence>
<evidence type="ECO:0000303" key="13">
    <source>
    </source>
</evidence>
<evidence type="ECO:0000305" key="14"/>
<evidence type="ECO:0007744" key="15">
    <source>
        <dbReference type="PDB" id="4P2L"/>
    </source>
</evidence>
<evidence type="ECO:0007829" key="16">
    <source>
        <dbReference type="PDB" id="4P2L"/>
    </source>
</evidence>
<protein>
    <recommendedName>
        <fullName>Sulfhydryl oxidase 1</fullName>
        <shortName>rQSOX</shortName>
        <shortName>rSOx</shortName>
        <ecNumber evidence="7 11">1.8.3.2</ecNumber>
    </recommendedName>
    <alternativeName>
        <fullName>FAD-dependent sulfhydryl oxidase-2</fullName>
        <shortName>SOx-2</shortName>
    </alternativeName>
    <alternativeName>
        <fullName>Quiescin Q6</fullName>
    </alternativeName>
</protein>
<comment type="function">
    <text evidence="2 7">Catalyzes the oxidation of sulfhydryl groups in peptide and protein thiols to disulfides with the reduction of oxygen to hydrogen peroxide (PubMed:11278790). Plays a role in disulfide bond formation in a variety of extracellular proteins. In fibroblasts, required for normal incorporation of laminin into the extracellular matrix, and thereby for normal cell-cell adhesion and cell migration (By similarity).</text>
</comment>
<comment type="catalytic activity">
    <reaction evidence="7 11">
        <text>2 R'C(R)SH + O2 = R'C(R)S-S(R)CR' + H2O2</text>
        <dbReference type="Rhea" id="RHEA:17357"/>
        <dbReference type="ChEBI" id="CHEBI:15379"/>
        <dbReference type="ChEBI" id="CHEBI:16240"/>
        <dbReference type="ChEBI" id="CHEBI:16520"/>
        <dbReference type="ChEBI" id="CHEBI:17412"/>
        <dbReference type="EC" id="1.8.3.2"/>
    </reaction>
</comment>
<comment type="cofactor">
    <cofactor evidence="7">
        <name>FAD</name>
        <dbReference type="ChEBI" id="CHEBI:57692"/>
    </cofactor>
    <text evidence="2">Binds 1 FAD per subunit.</text>
</comment>
<comment type="subunit">
    <text evidence="7">Monomer.</text>
</comment>
<comment type="subcellular location">
    <molecule>Isoform 1</molecule>
    <subcellularLocation>
        <location evidence="2">Golgi apparatus membrane</location>
        <topology evidence="2">Single-pass membrane protein</topology>
    </subcellularLocation>
    <subcellularLocation>
        <location evidence="2">Secreted</location>
    </subcellularLocation>
    <text evidence="2">A small proportion is secreted, probably via a proteolytic cleavage that removes the membrane anchor.</text>
</comment>
<comment type="subcellular location">
    <molecule>Isoform 3</molecule>
    <subcellularLocation>
        <location evidence="7 8">Secreted</location>
    </subcellularLocation>
</comment>
<comment type="alternative products">
    <event type="alternative splicing"/>
    <isoform>
        <id>Q6IUU3-1</id>
        <name>1</name>
        <name>QSOX-L</name>
        <sequence type="displayed"/>
    </isoform>
    <isoform>
        <id>Q6IUU3-2</id>
        <name>2</name>
        <sequence type="described" ref="VSP_020499 VSP_020497 VSP_020498"/>
    </isoform>
    <isoform>
        <id>Q6IUU3-3</id>
        <name>3</name>
        <sequence type="described" ref="VSP_020497 VSP_020498"/>
    </isoform>
</comment>
<comment type="tissue specificity">
    <text evidence="7 8 9">Isoform 3: Detected in seminal vesicle fluid (at protein level) (PubMed:11278790, PubMed:12354420). Isoform 1: Detected in brain, hypophysis, heart, testis and the seminal vesicle. Isoform 3: Highly expressed in the seminal vesicles followed by testis, heart, brain, thymus, hypophysis and lung. Also expressed in prostate, kidney, spleen, liver.</text>
</comment>
<comment type="PTM">
    <text evidence="2">N-glycosylated. O-glycosylated on Thr and Ser residues.</text>
</comment>
<comment type="similarity">
    <text evidence="14">Belongs to the quiescin-sulfhydryl oxidase (QSOX) family.</text>
</comment>
<feature type="signal peptide" evidence="7 8">
    <location>
        <begin position="1"/>
        <end position="32"/>
    </location>
</feature>
<feature type="chain" id="PRO_0000249535" description="Sulfhydryl oxidase 1">
    <location>
        <begin position="33"/>
        <end position="750"/>
    </location>
</feature>
<feature type="transmembrane region" description="Helical" evidence="3">
    <location>
        <begin position="710"/>
        <end position="730"/>
    </location>
</feature>
<feature type="domain" description="Thioredoxin" evidence="5">
    <location>
        <begin position="33"/>
        <end position="159"/>
    </location>
</feature>
<feature type="domain" description="ERV/ALR sulfhydryl oxidase" evidence="4">
    <location>
        <begin position="399"/>
        <end position="506"/>
    </location>
</feature>
<feature type="region of interest" description="Disordered" evidence="6">
    <location>
        <begin position="545"/>
        <end position="567"/>
    </location>
</feature>
<feature type="region of interest" description="Disordered" evidence="6">
    <location>
        <begin position="585"/>
        <end position="632"/>
    </location>
</feature>
<feature type="compositionally biased region" description="Low complexity" evidence="6">
    <location>
        <begin position="587"/>
        <end position="597"/>
    </location>
</feature>
<feature type="active site" description="Nucleophile" evidence="1">
    <location>
        <position position="73"/>
    </location>
</feature>
<feature type="active site" description="Nucleophile" evidence="1">
    <location>
        <position position="76"/>
    </location>
</feature>
<feature type="binding site" evidence="10 15">
    <location>
        <position position="404"/>
    </location>
    <ligand>
        <name>FAD</name>
        <dbReference type="ChEBI" id="CHEBI:57692"/>
    </ligand>
</feature>
<feature type="binding site" evidence="10 15">
    <location>
        <position position="411"/>
    </location>
    <ligand>
        <name>FAD</name>
        <dbReference type="ChEBI" id="CHEBI:57692"/>
    </ligand>
</feature>
<feature type="binding site" evidence="10 15">
    <location>
        <position position="415"/>
    </location>
    <ligand>
        <name>FAD</name>
        <dbReference type="ChEBI" id="CHEBI:57692"/>
    </ligand>
</feature>
<feature type="binding site" evidence="2">
    <location>
        <position position="454"/>
    </location>
    <ligand>
        <name>FAD</name>
        <dbReference type="ChEBI" id="CHEBI:57692"/>
    </ligand>
</feature>
<feature type="binding site" evidence="2">
    <location>
        <position position="458"/>
    </location>
    <ligand>
        <name>FAD</name>
        <dbReference type="ChEBI" id="CHEBI:57692"/>
    </ligand>
</feature>
<feature type="binding site" evidence="10 15">
    <location>
        <begin position="481"/>
        <end position="488"/>
    </location>
    <ligand>
        <name>FAD</name>
        <dbReference type="ChEBI" id="CHEBI:57692"/>
    </ligand>
</feature>
<feature type="binding site" evidence="10 15">
    <location>
        <position position="503"/>
    </location>
    <ligand>
        <name>FAD</name>
        <dbReference type="ChEBI" id="CHEBI:57692"/>
    </ligand>
</feature>
<feature type="binding site" evidence="10 15">
    <location>
        <position position="506"/>
    </location>
    <ligand>
        <name>FAD</name>
        <dbReference type="ChEBI" id="CHEBI:57692"/>
    </ligand>
</feature>
<feature type="glycosylation site" description="N-linked (GlcNAc...) asparagine" evidence="3">
    <location>
        <position position="133"/>
    </location>
</feature>
<feature type="glycosylation site" description="N-linked (GlcNAc...) asparagine" evidence="3">
    <location>
        <position position="246"/>
    </location>
</feature>
<feature type="disulfide bond" description="Redox-active" evidence="4 5 10 15">
    <location>
        <begin position="73"/>
        <end position="76"/>
    </location>
</feature>
<feature type="disulfide bond" evidence="10 15">
    <location>
        <begin position="104"/>
        <end position="113"/>
    </location>
</feature>
<feature type="disulfide bond" evidence="4 10 15">
    <location>
        <begin position="396"/>
        <end position="408"/>
    </location>
</feature>
<feature type="disulfide bond" evidence="4 10 15">
    <location>
        <begin position="452"/>
        <end position="455"/>
    </location>
</feature>
<feature type="disulfide bond" evidence="4 10 15">
    <location>
        <begin position="512"/>
        <end position="515"/>
    </location>
</feature>
<feature type="splice variant" id="VSP_020499" description="In isoform 2." evidence="12">
    <location>
        <begin position="27"/>
        <end position="32"/>
    </location>
</feature>
<feature type="splice variant" id="VSP_020497" description="In isoform 2 and isoform 3." evidence="12 13">
    <original>VM</original>
    <variation>LL</variation>
    <location>
        <begin position="569"/>
        <end position="570"/>
    </location>
</feature>
<feature type="splice variant" id="VSP_020498" description="In isoform 2 and isoform 3." evidence="12 13">
    <location>
        <begin position="571"/>
        <end position="750"/>
    </location>
</feature>
<feature type="sequence conflict" description="In Ref. 1; AAM67412." evidence="14" ref="1">
    <original>N</original>
    <variation>S</variation>
    <location>
        <position position="352"/>
    </location>
</feature>
<feature type="strand" evidence="16">
    <location>
        <begin position="41"/>
        <end position="48"/>
    </location>
</feature>
<feature type="turn" evidence="16">
    <location>
        <begin position="50"/>
        <end position="52"/>
    </location>
</feature>
<feature type="helix" evidence="16">
    <location>
        <begin position="53"/>
        <end position="57"/>
    </location>
</feature>
<feature type="strand" evidence="16">
    <location>
        <begin position="61"/>
        <end position="69"/>
    </location>
</feature>
<feature type="helix" evidence="16">
    <location>
        <begin position="74"/>
        <end position="89"/>
    </location>
</feature>
<feature type="helix" evidence="16">
    <location>
        <begin position="91"/>
        <end position="93"/>
    </location>
</feature>
<feature type="turn" evidence="16">
    <location>
        <begin position="94"/>
        <end position="96"/>
    </location>
</feature>
<feature type="strand" evidence="16">
    <location>
        <begin position="97"/>
        <end position="103"/>
    </location>
</feature>
<feature type="helix" evidence="16">
    <location>
        <begin position="107"/>
        <end position="109"/>
    </location>
</feature>
<feature type="helix" evidence="16">
    <location>
        <begin position="110"/>
        <end position="115"/>
    </location>
</feature>
<feature type="strand" evidence="16">
    <location>
        <begin position="120"/>
        <end position="127"/>
    </location>
</feature>
<feature type="helix" evidence="16">
    <location>
        <begin position="146"/>
        <end position="157"/>
    </location>
</feature>
<feature type="helix" evidence="16">
    <location>
        <begin position="176"/>
        <end position="180"/>
    </location>
</feature>
<feature type="turn" evidence="16">
    <location>
        <begin position="181"/>
        <end position="185"/>
    </location>
</feature>
<feature type="strand" evidence="16">
    <location>
        <begin position="189"/>
        <end position="196"/>
    </location>
</feature>
<feature type="helix" evidence="16">
    <location>
        <begin position="202"/>
        <end position="209"/>
    </location>
</feature>
<feature type="turn" evidence="16">
    <location>
        <begin position="210"/>
        <end position="212"/>
    </location>
</feature>
<feature type="strand" evidence="16">
    <location>
        <begin position="216"/>
        <end position="222"/>
    </location>
</feature>
<feature type="helix" evidence="16">
    <location>
        <begin position="226"/>
        <end position="231"/>
    </location>
</feature>
<feature type="strand" evidence="16">
    <location>
        <begin position="237"/>
        <end position="244"/>
    </location>
</feature>
<feature type="strand" evidence="16">
    <location>
        <begin position="249"/>
        <end position="251"/>
    </location>
</feature>
<feature type="strand" evidence="16">
    <location>
        <begin position="255"/>
        <end position="258"/>
    </location>
</feature>
<feature type="helix" evidence="16">
    <location>
        <begin position="259"/>
        <end position="266"/>
    </location>
</feature>
<feature type="helix" evidence="16">
    <location>
        <begin position="293"/>
        <end position="296"/>
    </location>
</feature>
<feature type="strand" evidence="16">
    <location>
        <begin position="301"/>
        <end position="303"/>
    </location>
</feature>
<feature type="helix" evidence="16">
    <location>
        <begin position="304"/>
        <end position="316"/>
    </location>
</feature>
<feature type="helix" evidence="16">
    <location>
        <begin position="319"/>
        <end position="321"/>
    </location>
</feature>
<feature type="strand" evidence="16">
    <location>
        <begin position="323"/>
        <end position="325"/>
    </location>
</feature>
<feature type="helix" evidence="16">
    <location>
        <begin position="327"/>
        <end position="343"/>
    </location>
</feature>
<feature type="helix" evidence="16">
    <location>
        <begin position="348"/>
        <end position="363"/>
    </location>
</feature>
<feature type="helix" evidence="16">
    <location>
        <begin position="371"/>
        <end position="380"/>
    </location>
</feature>
<feature type="helix" evidence="16">
    <location>
        <begin position="383"/>
        <end position="386"/>
    </location>
</feature>
<feature type="strand" evidence="16">
    <location>
        <begin position="403"/>
        <end position="405"/>
    </location>
</feature>
<feature type="helix" evidence="16">
    <location>
        <begin position="406"/>
        <end position="427"/>
    </location>
</feature>
<feature type="helix" evidence="16">
    <location>
        <begin position="437"/>
        <end position="448"/>
    </location>
</feature>
<feature type="helix" evidence="16">
    <location>
        <begin position="453"/>
        <end position="466"/>
    </location>
</feature>
<feature type="helix" evidence="16">
    <location>
        <begin position="467"/>
        <end position="469"/>
    </location>
</feature>
<feature type="helix" evidence="16">
    <location>
        <begin position="473"/>
        <end position="490"/>
    </location>
</feature>
<feature type="strand" evidence="16">
    <location>
        <begin position="505"/>
        <end position="507"/>
    </location>
</feature>
<feature type="turn" evidence="16">
    <location>
        <begin position="509"/>
        <end position="511"/>
    </location>
</feature>
<feature type="strand" evidence="16">
    <location>
        <begin position="516"/>
        <end position="519"/>
    </location>
</feature>
<feature type="helix" evidence="16">
    <location>
        <begin position="528"/>
        <end position="538"/>
    </location>
</feature>
<feature type="helix" evidence="16">
    <location>
        <begin position="541"/>
        <end position="543"/>
    </location>
</feature>
<keyword id="KW-0002">3D-structure</keyword>
<keyword id="KW-0025">Alternative splicing</keyword>
<keyword id="KW-0903">Direct protein sequencing</keyword>
<keyword id="KW-1015">Disulfide bond</keyword>
<keyword id="KW-0274">FAD</keyword>
<keyword id="KW-0285">Flavoprotein</keyword>
<keyword id="KW-0325">Glycoprotein</keyword>
<keyword id="KW-0333">Golgi apparatus</keyword>
<keyword id="KW-0472">Membrane</keyword>
<keyword id="KW-0560">Oxidoreductase</keyword>
<keyword id="KW-1185">Reference proteome</keyword>
<keyword id="KW-0964">Secreted</keyword>
<keyword id="KW-0732">Signal</keyword>
<keyword id="KW-0812">Transmembrane</keyword>
<keyword id="KW-1133">Transmembrane helix</keyword>
<sequence length="750" mass="82412">MRRCGRHSGPPSLLLLLLLLPPLLLSVPGAYAARLSVLYSSSDPLTLLDADTVRPAVLGSSSAWAVEFFASWCGHCIAFAPTWKELANDVKDWRPALNLAVLDCADETNSAVCREFNIAGFPTVRFFKAFSKNGTGTALPAAGANVQTLRMRLIDALESHRDTWPPACPPLEPAKLKDINEFFTRSKAEYLALIFEREDSYLGREVTLDLSQFHAVAVRRVLNSESDVVSKFAVTDFPSCYLLLRNGSVSRVPVLVESRPFYTSYLRGLPGLTREAPPTTAAPVTPDKIAPTVWKFADRSKIYMADLESALHYILRVEVGKFSVLEGQRLVALKKFVAVLAKYFPGQPLVQNFLHSINDWLQKQQKKKIPYSYFKAALDSRKENAVLAEKVNWIGCQGSEPHFRGFPCSLWVLFHFLTVQAHRYSEAHPQEPADGQEVLQAMRSYVQSFFGCRDCANHFEQMAAASMHQVKSPSNAVLWLWTSHNRVNARLSGALSEDPQFPKVQWPPRELCSACHNEVNGQVPLWDLGATLNFLKAHFSPANIVRDPPAPGPASRRGTQDPEASPNLVMDTLKLETGNSVLGHEQAASAASPGATALDVPAGKPEASGPQELNAGLSMGGASPGQGPPEHTEELLRDVQENAQGQQHLSKRDTEALLLPEVNHLQGPLAPRRGGHSPKQLASILEGEPEALAIQGRRQWLQVLGGGVSFLDISLCVGLYSVSFMGLLAMYTYFRARMRTPKGHVSYPTA</sequence>
<organism>
    <name type="scientific">Rattus norvegicus</name>
    <name type="common">Rat</name>
    <dbReference type="NCBI Taxonomy" id="10116"/>
    <lineage>
        <taxon>Eukaryota</taxon>
        <taxon>Metazoa</taxon>
        <taxon>Chordata</taxon>
        <taxon>Craniata</taxon>
        <taxon>Vertebrata</taxon>
        <taxon>Euteleostomi</taxon>
        <taxon>Mammalia</taxon>
        <taxon>Eutheria</taxon>
        <taxon>Euarchontoglires</taxon>
        <taxon>Glires</taxon>
        <taxon>Rodentia</taxon>
        <taxon>Myomorpha</taxon>
        <taxon>Muroidea</taxon>
        <taxon>Muridae</taxon>
        <taxon>Murinae</taxon>
        <taxon>Rattus</taxon>
    </lineage>
</organism>
<proteinExistence type="evidence at protein level"/>
<name>QSOX1_RAT</name>
<reference key="1">
    <citation type="journal article" date="2001" name="J. Biol. Chem.">
        <title>Rat seminal vesicle FAD-dependent sulfhydryl oxidase: biochemical characterization and molecular cloning of a member of the new sulfhydryl oxidase/quiescin Q6 gene family.</title>
        <authorList>
            <person name="Benayoun B."/>
            <person name="Esnard-Feve A."/>
            <person name="Castella S."/>
            <person name="Courty Y."/>
            <person name="Esnard F."/>
        </authorList>
    </citation>
    <scope>NUCLEOTIDE SEQUENCE [MRNA] (ISOFORMS 2 AND 3)</scope>
    <scope>PARTIAL PROTEIN SEQUENCE</scope>
    <scope>FUNCTION</scope>
    <scope>CATALYTIC ACTIVITY</scope>
    <scope>GLYCOSYLATION</scope>
    <scope>TISSUE SPECIFICITY</scope>
    <scope>COFACTOR</scope>
    <scope>SUBUNIT</scope>
    <scope>SUBCELLULAR LOCATION (ISOFORM 3)</scope>
    <source>
        <strain>Wistar</strain>
        <tissue>Seminal vesicle</tissue>
    </source>
</reference>
<reference key="2">
    <citation type="journal article" date="2002" name="J. Dermatol. Sci.">
        <title>Sulfhydryl oxidase (SOx) from mouse epidermis: molecular cloning, nucleotide sequence, and expression of recombinant protein in the cultured cells.</title>
        <authorList>
            <person name="Matsuba S."/>
            <person name="Suga Y."/>
            <person name="Ishidoh K."/>
            <person name="Hashimoto Y."/>
            <person name="Takamori K."/>
            <person name="Kominami E."/>
            <person name="Wilhelm B."/>
            <person name="Seitz J."/>
            <person name="Ogawa H."/>
        </authorList>
    </citation>
    <scope>NUCLEOTIDE SEQUENCE [MRNA] (ISOFORM 3)</scope>
    <scope>PROTEIN SEQUENCE OF 33-65</scope>
    <scope>SUBCELLULAR LOCATION</scope>
    <scope>TISSUE SPECIFICITY</scope>
    <scope>IDENTIFICATION BY MASS SPECTROMETRY</scope>
</reference>
<reference key="3">
    <citation type="journal article" date="2006" name="Biochim. Biophys. Acta">
        <title>Identification and expression of a new splicing variant of FAD-sulfhydryl oxidase in adult rat brain.</title>
        <authorList>
            <person name="Radom J."/>
            <person name="Colin D."/>
            <person name="Thiebault F."/>
            <person name="Dognin-Bergeret M.J."/>
            <person name="Mairet-Coello G."/>
            <person name="Esnard-Feve A."/>
            <person name="Fellmann D."/>
            <person name="Jouvenot M."/>
        </authorList>
    </citation>
    <scope>NUCLEOTIDE SEQUENCE [MRNA] (ISOFORM 1)</scope>
    <scope>TISSUE SPECIFICITY</scope>
    <scope>IDENTIFICATION BY MASS SPECTROMETRY</scope>
    <source>
        <strain>Wistar</strain>
        <tissue>Brain</tissue>
    </source>
</reference>
<reference key="4">
    <citation type="journal article" date="2016" name="Protein Eng. Des. Sel.">
        <title>Overcoming a species-specificity barrier in development of an inhibitory antibody targeting a modulator of tumor stroma.</title>
        <authorList>
            <person name="Grossman I."/>
            <person name="Ilani T."/>
            <person name="Fleishman S.J."/>
            <person name="Fass D."/>
        </authorList>
    </citation>
    <scope>CATALYTIC ACTIVITY</scope>
</reference>
<reference evidence="15" key="5">
    <citation type="journal article" date="2014" name="Protein Sci.">
        <title>Enzyme structure captures four cysteines aligned for disulfide relay.</title>
        <authorList>
            <person name="Gat Y."/>
            <person name="Vardi-Kilshtain A."/>
            <person name="Grossman I."/>
            <person name="Major D.T."/>
            <person name="Fass D."/>
        </authorList>
    </citation>
    <scope>X-RAY CRYSTALLOGRAPHY (2.90 ANGSTROMS) OF 33-550 IN COMPLEX WITH FAD</scope>
    <scope>DISULFIDE BONDS</scope>
    <scope>COFACTOR</scope>
</reference>
<accession>Q6IUU3</accession>
<accession>Q8K4M2</accession>
<accession>Q99J80</accession>